<proteinExistence type="evidence at protein level"/>
<keyword id="KW-0963">Cytoplasm</keyword>
<keyword id="KW-0539">Nucleus</keyword>
<keyword id="KW-1185">Reference proteome</keyword>
<keyword id="KW-0690">Ribosome biogenesis</keyword>
<comment type="function">
    <text evidence="4 5">Involved in the biogenesis of the 60S ribosomal subunit and translational activation of ribosomes. Together with the EF-2-like GTPase RIA1, may trigger the GTP-dependent release of TIF6 from 60S pre-ribosomes in the cytoplasm, thereby activating ribosomes for translation competence by allowing 80S ribosome assembly and facilitating TIF6 recycling to the nucleus, where it is required for 60S rRNA processing and nuclear export.</text>
</comment>
<comment type="subunit">
    <text>Associates with the 60S ribosomal subunit.</text>
</comment>
<comment type="interaction">
    <interactant intactId="EBI-27124">
        <id>Q07953</id>
    </interactant>
    <interactant intactId="EBI-28980">
        <id>P53893</id>
        <label>RIA1</label>
    </interactant>
    <organismsDiffer>false</organismsDiffer>
    <experiments>3</experiments>
</comment>
<comment type="subcellular location">
    <subcellularLocation>
        <location evidence="2">Cytoplasm</location>
    </subcellularLocation>
    <subcellularLocation>
        <location>Nucleus</location>
    </subcellularLocation>
</comment>
<comment type="miscellaneous">
    <text evidence="1">Present with 5060 molecules/cell in log phase SD medium.</text>
</comment>
<comment type="similarity">
    <text evidence="6">Belongs to the SDO1/SBDS family.</text>
</comment>
<accession>Q07953</accession>
<accession>D6VY24</accession>
<organism>
    <name type="scientific">Saccharomyces cerevisiae (strain ATCC 204508 / S288c)</name>
    <name type="common">Baker's yeast</name>
    <dbReference type="NCBI Taxonomy" id="559292"/>
    <lineage>
        <taxon>Eukaryota</taxon>
        <taxon>Fungi</taxon>
        <taxon>Dikarya</taxon>
        <taxon>Ascomycota</taxon>
        <taxon>Saccharomycotina</taxon>
        <taxon>Saccharomycetes</taxon>
        <taxon>Saccharomycetales</taxon>
        <taxon>Saccharomycetaceae</taxon>
        <taxon>Saccharomyces</taxon>
    </lineage>
</organism>
<name>SDO1_YEAST</name>
<feature type="chain" id="PRO_0000123764" description="Ribosome maturation protein SDO1">
    <location>
        <begin position="1"/>
        <end position="250"/>
    </location>
</feature>
<feature type="mutagenesis site" description="Impairs protein folding and stability. Loss of function." evidence="3">
    <original>C</original>
    <variation>W</variation>
    <location>
        <position position="31"/>
    </location>
</feature>
<feature type="mutagenesis site" description="Impairs protein folding and stability. Loss of function." evidence="3">
    <original>N</original>
    <variation>I</variation>
    <location>
        <position position="34"/>
    </location>
</feature>
<feature type="mutagenesis site" description="Impairs protein folding and stability. Loss of function." evidence="3">
    <original>L</original>
    <variation>P</variation>
    <location>
        <position position="71"/>
    </location>
</feature>
<evidence type="ECO:0000269" key="1">
    <source>
    </source>
</evidence>
<evidence type="ECO:0000269" key="2">
    <source>
    </source>
</evidence>
<evidence type="ECO:0000269" key="3">
    <source>
    </source>
</evidence>
<evidence type="ECO:0000269" key="4">
    <source>
    </source>
</evidence>
<evidence type="ECO:0000269" key="5">
    <source>
    </source>
</evidence>
<evidence type="ECO:0000305" key="6"/>
<dbReference type="EMBL" id="Z73194">
    <property type="protein sequence ID" value="CAA97545.1"/>
    <property type="molecule type" value="Genomic_DNA"/>
</dbReference>
<dbReference type="EMBL" id="BK006945">
    <property type="protein sequence ID" value="DAA09340.1"/>
    <property type="molecule type" value="Genomic_DNA"/>
</dbReference>
<dbReference type="PIR" id="S64849">
    <property type="entry name" value="S64849"/>
</dbReference>
<dbReference type="RefSeq" id="NP_013122.1">
    <property type="nucleotide sequence ID" value="NM_001181909.1"/>
</dbReference>
<dbReference type="SASBDB" id="Q07953"/>
<dbReference type="SMR" id="Q07953"/>
<dbReference type="BioGRID" id="31296">
    <property type="interactions" value="269"/>
</dbReference>
<dbReference type="FunCoup" id="Q07953">
    <property type="interactions" value="1240"/>
</dbReference>
<dbReference type="IntAct" id="Q07953">
    <property type="interactions" value="20"/>
</dbReference>
<dbReference type="MINT" id="Q07953"/>
<dbReference type="STRING" id="4932.YLR022C"/>
<dbReference type="ChEMBL" id="CHEMBL1741198"/>
<dbReference type="PaxDb" id="4932-YLR022C"/>
<dbReference type="PeptideAtlas" id="Q07953"/>
<dbReference type="EnsemblFungi" id="YLR022C_mRNA">
    <property type="protein sequence ID" value="YLR022C"/>
    <property type="gene ID" value="YLR022C"/>
</dbReference>
<dbReference type="GeneID" id="850709"/>
<dbReference type="KEGG" id="sce:YLR022C"/>
<dbReference type="AGR" id="SGD:S000004012"/>
<dbReference type="SGD" id="S000004012">
    <property type="gene designation" value="SDO1"/>
</dbReference>
<dbReference type="VEuPathDB" id="FungiDB:YLR022C"/>
<dbReference type="eggNOG" id="KOG2917">
    <property type="taxonomic scope" value="Eukaryota"/>
</dbReference>
<dbReference type="GeneTree" id="ENSGT00390000008135"/>
<dbReference type="HOGENOM" id="CLU_043216_1_1_1"/>
<dbReference type="InParanoid" id="Q07953"/>
<dbReference type="OMA" id="TIISAKC"/>
<dbReference type="OrthoDB" id="10253092at2759"/>
<dbReference type="BioCyc" id="YEAST:G3O-32183-MONOMER"/>
<dbReference type="BioGRID-ORCS" id="850709">
    <property type="hits" value="3 hits in 10 CRISPR screens"/>
</dbReference>
<dbReference type="PRO" id="PR:Q07953"/>
<dbReference type="Proteomes" id="UP000002311">
    <property type="component" value="Chromosome XII"/>
</dbReference>
<dbReference type="RNAct" id="Q07953">
    <property type="molecule type" value="protein"/>
</dbReference>
<dbReference type="GO" id="GO:0005737">
    <property type="term" value="C:cytoplasm"/>
    <property type="evidence" value="ECO:0007005"/>
    <property type="project" value="SGD"/>
</dbReference>
<dbReference type="GO" id="GO:0005634">
    <property type="term" value="C:nucleus"/>
    <property type="evidence" value="ECO:0007005"/>
    <property type="project" value="SGD"/>
</dbReference>
<dbReference type="GO" id="GO:1990932">
    <property type="term" value="F:5.8S rRNA binding"/>
    <property type="evidence" value="ECO:0000314"/>
    <property type="project" value="SGD"/>
</dbReference>
<dbReference type="GO" id="GO:0005085">
    <property type="term" value="F:guanyl-nucleotide exchange factor activity"/>
    <property type="evidence" value="ECO:0000314"/>
    <property type="project" value="SGD"/>
</dbReference>
<dbReference type="GO" id="GO:0070180">
    <property type="term" value="F:large ribosomal subunit rRNA binding"/>
    <property type="evidence" value="ECO:0000314"/>
    <property type="project" value="SGD"/>
</dbReference>
<dbReference type="GO" id="GO:0042134">
    <property type="term" value="F:rRNA primary transcript binding"/>
    <property type="evidence" value="ECO:0000314"/>
    <property type="project" value="SGD"/>
</dbReference>
<dbReference type="GO" id="GO:0070181">
    <property type="term" value="F:small ribosomal subunit rRNA binding"/>
    <property type="evidence" value="ECO:0000314"/>
    <property type="project" value="SGD"/>
</dbReference>
<dbReference type="GO" id="GO:0042256">
    <property type="term" value="P:cytosolic ribosome assembly"/>
    <property type="evidence" value="ECO:0000315"/>
    <property type="project" value="SGD"/>
</dbReference>
<dbReference type="FunFam" id="3.30.1250.10:FF:000001">
    <property type="entry name" value="SBDS, ribosome maturation factor"/>
    <property type="match status" value="1"/>
</dbReference>
<dbReference type="FunFam" id="1.10.10.900:FF:000002">
    <property type="entry name" value="Sdo1p"/>
    <property type="match status" value="1"/>
</dbReference>
<dbReference type="Gene3D" id="3.30.70.240">
    <property type="match status" value="1"/>
</dbReference>
<dbReference type="Gene3D" id="3.30.1250.10">
    <property type="entry name" value="Ribosome maturation protein SBDS, N-terminal domain"/>
    <property type="match status" value="1"/>
</dbReference>
<dbReference type="Gene3D" id="1.10.10.900">
    <property type="entry name" value="SBDS protein C-terminal domain, subdomain 1"/>
    <property type="match status" value="1"/>
</dbReference>
<dbReference type="InterPro" id="IPR018023">
    <property type="entry name" value="Ribosome_mat_SBDS_CS"/>
</dbReference>
<dbReference type="InterPro" id="IPR036786">
    <property type="entry name" value="Ribosome_mat_SBDS_N_sf"/>
</dbReference>
<dbReference type="InterPro" id="IPR002140">
    <property type="entry name" value="Sdo1/SBDS"/>
</dbReference>
<dbReference type="InterPro" id="IPR039100">
    <property type="entry name" value="Sdo1/SBDS-like"/>
</dbReference>
<dbReference type="InterPro" id="IPR046928">
    <property type="entry name" value="SDO1/SBDS_C"/>
</dbReference>
<dbReference type="InterPro" id="IPR018978">
    <property type="entry name" value="SDO1/SBDS_central"/>
</dbReference>
<dbReference type="InterPro" id="IPR037188">
    <property type="entry name" value="Sdo1/SBDS_central_sf"/>
</dbReference>
<dbReference type="InterPro" id="IPR019783">
    <property type="entry name" value="SDO1/SBDS_N"/>
</dbReference>
<dbReference type="NCBIfam" id="TIGR00291">
    <property type="entry name" value="RNA_SBDS"/>
    <property type="match status" value="1"/>
</dbReference>
<dbReference type="PANTHER" id="PTHR10927">
    <property type="entry name" value="RIBOSOME MATURATION PROTEIN SBDS"/>
    <property type="match status" value="1"/>
</dbReference>
<dbReference type="PANTHER" id="PTHR10927:SF1">
    <property type="entry name" value="RIBOSOME MATURATION PROTEIN SBDS"/>
    <property type="match status" value="1"/>
</dbReference>
<dbReference type="Pfam" id="PF20268">
    <property type="entry name" value="SBDS_C"/>
    <property type="match status" value="1"/>
</dbReference>
<dbReference type="Pfam" id="PF09377">
    <property type="entry name" value="SBDS_domain_II"/>
    <property type="match status" value="1"/>
</dbReference>
<dbReference type="Pfam" id="PF01172">
    <property type="entry name" value="SBDS_N"/>
    <property type="match status" value="1"/>
</dbReference>
<dbReference type="SUPFAM" id="SSF89895">
    <property type="entry name" value="FYSH domain"/>
    <property type="match status" value="1"/>
</dbReference>
<dbReference type="SUPFAM" id="SSF109728">
    <property type="entry name" value="Hypothetical protein AF0491, middle domain"/>
    <property type="match status" value="1"/>
</dbReference>
<dbReference type="PROSITE" id="PS01267">
    <property type="entry name" value="UPF0023"/>
    <property type="match status" value="1"/>
</dbReference>
<gene>
    <name type="primary">SDO1</name>
    <name type="ordered locus">YLR022C</name>
</gene>
<sequence>MPINQPSGQIKLTNVSLVRLKKARKRFEVACYQNKVQDYRKGIEKDLDEVLQIHQVFMNVSKGLVANKEDLQKCFGTTNVDDVIEEIMHKGEIQLSEKERQLMLNKVNNEMLTIVSAKCINPVSKKRYPPTMIHKALQELKFSPVINKPAKLQALEAIKLLVSKQIIPIVRAKMKVKVAISEPSRQPELIEKISKLIASSPGESTKPELDPWTCTGLIDPVNYRDLMTLCDKKGTVQVLDMAVIDNTTHN</sequence>
<protein>
    <recommendedName>
        <fullName>Ribosome maturation protein SDO1</fullName>
    </recommendedName>
</protein>
<reference key="1">
    <citation type="journal article" date="1997" name="Nature">
        <title>The nucleotide sequence of Saccharomyces cerevisiae chromosome XII.</title>
        <authorList>
            <person name="Johnston M."/>
            <person name="Hillier L.W."/>
            <person name="Riles L."/>
            <person name="Albermann K."/>
            <person name="Andre B."/>
            <person name="Ansorge W."/>
            <person name="Benes V."/>
            <person name="Brueckner M."/>
            <person name="Delius H."/>
            <person name="Dubois E."/>
            <person name="Duesterhoeft A."/>
            <person name="Entian K.-D."/>
            <person name="Floeth M."/>
            <person name="Goffeau A."/>
            <person name="Hebling U."/>
            <person name="Heumann K."/>
            <person name="Heuss-Neitzel D."/>
            <person name="Hilbert H."/>
            <person name="Hilger F."/>
            <person name="Kleine K."/>
            <person name="Koetter P."/>
            <person name="Louis E.J."/>
            <person name="Messenguy F."/>
            <person name="Mewes H.-W."/>
            <person name="Miosga T."/>
            <person name="Moestl D."/>
            <person name="Mueller-Auer S."/>
            <person name="Nentwich U."/>
            <person name="Obermaier B."/>
            <person name="Piravandi E."/>
            <person name="Pohl T.M."/>
            <person name="Portetelle D."/>
            <person name="Purnelle B."/>
            <person name="Rechmann S."/>
            <person name="Rieger M."/>
            <person name="Rinke M."/>
            <person name="Rose M."/>
            <person name="Scharfe M."/>
            <person name="Scherens B."/>
            <person name="Scholler P."/>
            <person name="Schwager C."/>
            <person name="Schwarz S."/>
            <person name="Underwood A.P."/>
            <person name="Urrestarazu L.A."/>
            <person name="Vandenbol M."/>
            <person name="Verhasselt P."/>
            <person name="Vierendeels F."/>
            <person name="Voet M."/>
            <person name="Volckaert G."/>
            <person name="Voss H."/>
            <person name="Wambutt R."/>
            <person name="Wedler E."/>
            <person name="Wedler H."/>
            <person name="Zimmermann F.K."/>
            <person name="Zollner A."/>
            <person name="Hani J."/>
            <person name="Hoheisel J.D."/>
        </authorList>
    </citation>
    <scope>NUCLEOTIDE SEQUENCE [LARGE SCALE GENOMIC DNA]</scope>
    <source>
        <strain>ATCC 204508 / S288c</strain>
    </source>
</reference>
<reference key="2">
    <citation type="journal article" date="2014" name="G3 (Bethesda)">
        <title>The reference genome sequence of Saccharomyces cerevisiae: Then and now.</title>
        <authorList>
            <person name="Engel S.R."/>
            <person name="Dietrich F.S."/>
            <person name="Fisk D.G."/>
            <person name="Binkley G."/>
            <person name="Balakrishnan R."/>
            <person name="Costanzo M.C."/>
            <person name="Dwight S.S."/>
            <person name="Hitz B.C."/>
            <person name="Karra K."/>
            <person name="Nash R.S."/>
            <person name="Weng S."/>
            <person name="Wong E.D."/>
            <person name="Lloyd P."/>
            <person name="Skrzypek M.S."/>
            <person name="Miyasato S.R."/>
            <person name="Simison M."/>
            <person name="Cherry J.M."/>
        </authorList>
    </citation>
    <scope>GENOME REANNOTATION</scope>
    <source>
        <strain>ATCC 204508 / S288c</strain>
    </source>
</reference>
<reference key="3">
    <citation type="journal article" date="2003" name="Mol. Cell">
        <title>Assigning function to yeast proteins by integration of technologies.</title>
        <authorList>
            <person name="Hazbun T.R."/>
            <person name="Malmstroem L."/>
            <person name="Anderson S."/>
            <person name="Graczyk B.J."/>
            <person name="Fox B."/>
            <person name="Riffle M."/>
            <person name="Sundin B.A."/>
            <person name="Aranda J.D."/>
            <person name="McDonald W.H."/>
            <person name="Chiu C.-H."/>
            <person name="Snydsman B.E."/>
            <person name="Bradley P."/>
            <person name="Muller E.G.D."/>
            <person name="Fields S."/>
            <person name="Baker D."/>
            <person name="Yates J.R. III"/>
            <person name="Davis T.N."/>
        </authorList>
    </citation>
    <scope>IDENTIFICATION BY MASS SPECTROMETRY</scope>
    <scope>SUBCELLULAR LOCATION [LARGE SCALE ANALYSIS]</scope>
</reference>
<reference key="4">
    <citation type="journal article" date="2003" name="Nature">
        <title>Global analysis of protein localization in budding yeast.</title>
        <authorList>
            <person name="Huh W.-K."/>
            <person name="Falvo J.V."/>
            <person name="Gerke L.C."/>
            <person name="Carroll A.S."/>
            <person name="Howson R.W."/>
            <person name="Weissman J.S."/>
            <person name="O'Shea E.K."/>
        </authorList>
    </citation>
    <scope>SUBCELLULAR LOCATION [LARGE SCALE ANALYSIS]</scope>
</reference>
<reference key="5">
    <citation type="journal article" date="2003" name="Nature">
        <title>Global analysis of protein expression in yeast.</title>
        <authorList>
            <person name="Ghaemmaghami S."/>
            <person name="Huh W.-K."/>
            <person name="Bower K."/>
            <person name="Howson R.W."/>
            <person name="Belle A."/>
            <person name="Dephoure N."/>
            <person name="O'Shea E.K."/>
            <person name="Weissman J.S."/>
        </authorList>
    </citation>
    <scope>LEVEL OF PROTEIN EXPRESSION [LARGE SCALE ANALYSIS]</scope>
</reference>
<reference key="6">
    <citation type="journal article" date="2005" name="J. Biol. Chem.">
        <title>The Shwachman-Bodian-Diamond syndrome protein family is involved in RNA metabolism.</title>
        <authorList>
            <person name="Savchenko A."/>
            <person name="Krogan N."/>
            <person name="Cort J.R."/>
            <person name="Evdokimova E."/>
            <person name="Lew J.M."/>
            <person name="Yee A.A."/>
            <person name="Sanchez-Pulido L."/>
            <person name="Andrade M.A."/>
            <person name="Bochkarev A."/>
            <person name="Watson J.D."/>
            <person name="Kennedy M.A."/>
            <person name="Greenblatt J."/>
            <person name="Hughes T."/>
            <person name="Arrowsmith C.H."/>
            <person name="Rommens J.M."/>
            <person name="Edwards A.M."/>
        </authorList>
    </citation>
    <scope>ASSOCIATION WITH 60S RIBOSOMAL SUBUNITS</scope>
</reference>
<reference key="7">
    <citation type="journal article" date="2005" name="J. Biol. Chem.">
        <title>Structural and mutational analysis of the SBDS protein family. Insight into the leukemia-associated Shwachman-Diamond Syndrome.</title>
        <authorList>
            <person name="Shammas C."/>
            <person name="Menne T.F."/>
            <person name="Hilcenko C."/>
            <person name="Michell S.R."/>
            <person name="Goyenechea B."/>
            <person name="Boocock G.R.B."/>
            <person name="Durie P.R."/>
            <person name="Rommens J.M."/>
            <person name="Warren A.J."/>
        </authorList>
    </citation>
    <scope>MUTAGENESIS OF CYS-31; ASN-34 AND LEU-71</scope>
</reference>
<reference key="8">
    <citation type="journal article" date="2007" name="Nat. Genet.">
        <title>The Shwachman-Bodian-Diamond syndrome protein mediates translational activation of ribosomes in yeast.</title>
        <authorList>
            <person name="Menne T.F."/>
            <person name="Goyenechea B."/>
            <person name="Sanchez-Puig N."/>
            <person name="Wong C.C."/>
            <person name="Tonkin L.M."/>
            <person name="Ancliff P.J."/>
            <person name="Brost R.L."/>
            <person name="Costanzo M."/>
            <person name="Boone C."/>
            <person name="Warren A.J."/>
        </authorList>
    </citation>
    <scope>FUNCTION</scope>
    <scope>SUBCELLULAR LOCATION</scope>
</reference>
<reference key="9">
    <citation type="journal article" date="2010" name="Haematologica">
        <title>Distinct ribosome maturation defects in yeast models of Diamond-Blackfan anemia and Shwachman-Diamond syndrome.</title>
        <authorList>
            <person name="Moore J.B. IV"/>
            <person name="Farrar J.E."/>
            <person name="Arceci R.J."/>
            <person name="Liu J.M."/>
            <person name="Ellis S.R."/>
        </authorList>
    </citation>
    <scope>FUNCTION</scope>
</reference>
<reference key="10">
    <citation type="journal article" date="2012" name="Proc. Natl. Acad. Sci. U.S.A.">
        <title>N-terminal acetylome analyses and functional insights of the N-terminal acetyltransferase NatB.</title>
        <authorList>
            <person name="Van Damme P."/>
            <person name="Lasa M."/>
            <person name="Polevoda B."/>
            <person name="Gazquez C."/>
            <person name="Elosegui-Artola A."/>
            <person name="Kim D.S."/>
            <person name="De Juan-Pardo E."/>
            <person name="Demeyer K."/>
            <person name="Hole K."/>
            <person name="Larrea E."/>
            <person name="Timmerman E."/>
            <person name="Prieto J."/>
            <person name="Arnesen T."/>
            <person name="Sherman F."/>
            <person name="Gevaert K."/>
            <person name="Aldabe R."/>
        </authorList>
    </citation>
    <scope>IDENTIFICATION BY MASS SPECTROMETRY [LARGE SCALE ANALYSIS]</scope>
</reference>